<sequence length="861" mass="98003">MGTSCNKINSNSNKGKENMHFVLDDNGDSKGNASNQQVERDDKLDMETTRWNGKEFEEPLSTNKKLIIQSNNTSSQHSTPPLSISDTSTHTGSSTDNVEANPNTGFSSARKRSLRSSNLKKKFVPLSSPEESNESEFIDDDESDEVASIIDIKEDETFDSKVEIPEAAPSSSTESDEESIPLSYQSKRRRVSARASSSASSSSRTQAKSIPSHERTHYRLIRQHPELEHVWEKLEEEAPREVKQIEQPKELVLNLLPFQREGVYWLKRQEDSSFGGGILADEMGMGKTIQTIALLLSEPRGKPTLVVAPVVAIMQWKEEIDTHTNKALSTYLYYGQARDISGEELSSYDVVLTSYNVIESVYRKERSGFRRKNGVVKEKSLLHQMEFYRIILDEAHGIKSRTCNTARAVCGLRTTRKICLSGTPLQNRIGELFSLLRFLRADPFAYYYCLQCECKSLHWRFSDRSNCDECGHKPMSHTCYFNAEMLKPIQKFGYEGPGKLAFKKVHSLLKHIMLRRTKLERADDLGLPPRVVEVRKDLFNEEEEDVYQSLYMDSKRKFNTYLAEGVVLNNYANIFQLITRMRQMADHPDLVLASKRKTVDIENQENIVCKICDEVAQDAIESRCHHTFCRLCVTEYINAAGDGENVNCPSCFIPLSIDLSAPALEDFSEEKFKNASILNRIDMNSWRSSTKIEALVEELYLLRKKDRTLKSIVFSQFTSMLDLIHWRLRKAGFNCVKLDGGMTPKARAATIEAFSNDINITIFLVSLKAGGVALNLTEASQVFMMDPWWNGAVQWQAMDRIHRIGQKRPIKVITLCIENSIESKIIELQEKKAQMIHATIDQDEKALNQLSVEDMQFLFSN</sequence>
<name>RHP16_SCHPO</name>
<reference key="1">
    <citation type="journal article" date="1996" name="Mutat. Res.">
        <title>Cloning of Schizosaccharomyces pombe rph16+, a gene homologous to the Saccharomyces cerevisiae RAD16 gene.</title>
        <authorList>
            <person name="Bang D.D."/>
            <person name="Ketting R."/>
            <person name="de Ruijter M."/>
            <person name="Brandsma J.A."/>
            <person name="Verhage R.A."/>
            <person name="de Putte P."/>
            <person name="Brouwer J."/>
        </authorList>
    </citation>
    <scope>NUCLEOTIDE SEQUENCE [GENOMIC DNA]</scope>
</reference>
<reference key="2">
    <citation type="journal article" date="2002" name="Nature">
        <title>The genome sequence of Schizosaccharomyces pombe.</title>
        <authorList>
            <person name="Wood V."/>
            <person name="Gwilliam R."/>
            <person name="Rajandream M.A."/>
            <person name="Lyne M.H."/>
            <person name="Lyne R."/>
            <person name="Stewart A."/>
            <person name="Sgouros J.G."/>
            <person name="Peat N."/>
            <person name="Hayles J."/>
            <person name="Baker S.G."/>
            <person name="Basham D."/>
            <person name="Bowman S."/>
            <person name="Brooks K."/>
            <person name="Brown D."/>
            <person name="Brown S."/>
            <person name="Chillingworth T."/>
            <person name="Churcher C.M."/>
            <person name="Collins M."/>
            <person name="Connor R."/>
            <person name="Cronin A."/>
            <person name="Davis P."/>
            <person name="Feltwell T."/>
            <person name="Fraser A."/>
            <person name="Gentles S."/>
            <person name="Goble A."/>
            <person name="Hamlin N."/>
            <person name="Harris D.E."/>
            <person name="Hidalgo J."/>
            <person name="Hodgson G."/>
            <person name="Holroyd S."/>
            <person name="Hornsby T."/>
            <person name="Howarth S."/>
            <person name="Huckle E.J."/>
            <person name="Hunt S."/>
            <person name="Jagels K."/>
            <person name="James K.D."/>
            <person name="Jones L."/>
            <person name="Jones M."/>
            <person name="Leather S."/>
            <person name="McDonald S."/>
            <person name="McLean J."/>
            <person name="Mooney P."/>
            <person name="Moule S."/>
            <person name="Mungall K.L."/>
            <person name="Murphy L.D."/>
            <person name="Niblett D."/>
            <person name="Odell C."/>
            <person name="Oliver K."/>
            <person name="O'Neil S."/>
            <person name="Pearson D."/>
            <person name="Quail M.A."/>
            <person name="Rabbinowitsch E."/>
            <person name="Rutherford K.M."/>
            <person name="Rutter S."/>
            <person name="Saunders D."/>
            <person name="Seeger K."/>
            <person name="Sharp S."/>
            <person name="Skelton J."/>
            <person name="Simmonds M.N."/>
            <person name="Squares R."/>
            <person name="Squares S."/>
            <person name="Stevens K."/>
            <person name="Taylor K."/>
            <person name="Taylor R.G."/>
            <person name="Tivey A."/>
            <person name="Walsh S.V."/>
            <person name="Warren T."/>
            <person name="Whitehead S."/>
            <person name="Woodward J.R."/>
            <person name="Volckaert G."/>
            <person name="Aert R."/>
            <person name="Robben J."/>
            <person name="Grymonprez B."/>
            <person name="Weltjens I."/>
            <person name="Vanstreels E."/>
            <person name="Rieger M."/>
            <person name="Schaefer M."/>
            <person name="Mueller-Auer S."/>
            <person name="Gabel C."/>
            <person name="Fuchs M."/>
            <person name="Duesterhoeft A."/>
            <person name="Fritzc C."/>
            <person name="Holzer E."/>
            <person name="Moestl D."/>
            <person name="Hilbert H."/>
            <person name="Borzym K."/>
            <person name="Langer I."/>
            <person name="Beck A."/>
            <person name="Lehrach H."/>
            <person name="Reinhardt R."/>
            <person name="Pohl T.M."/>
            <person name="Eger P."/>
            <person name="Zimmermann W."/>
            <person name="Wedler H."/>
            <person name="Wambutt R."/>
            <person name="Purnelle B."/>
            <person name="Goffeau A."/>
            <person name="Cadieu E."/>
            <person name="Dreano S."/>
            <person name="Gloux S."/>
            <person name="Lelaure V."/>
            <person name="Mottier S."/>
            <person name="Galibert F."/>
            <person name="Aves S.J."/>
            <person name="Xiang Z."/>
            <person name="Hunt C."/>
            <person name="Moore K."/>
            <person name="Hurst S.M."/>
            <person name="Lucas M."/>
            <person name="Rochet M."/>
            <person name="Gaillardin C."/>
            <person name="Tallada V.A."/>
            <person name="Garzon A."/>
            <person name="Thode G."/>
            <person name="Daga R.R."/>
            <person name="Cruzado L."/>
            <person name="Jimenez J."/>
            <person name="Sanchez M."/>
            <person name="del Rey F."/>
            <person name="Benito J."/>
            <person name="Dominguez A."/>
            <person name="Revuelta J.L."/>
            <person name="Moreno S."/>
            <person name="Armstrong J."/>
            <person name="Forsburg S.L."/>
            <person name="Cerutti L."/>
            <person name="Lowe T."/>
            <person name="McCombie W.R."/>
            <person name="Paulsen I."/>
            <person name="Potashkin J."/>
            <person name="Shpakovski G.V."/>
            <person name="Ussery D."/>
            <person name="Barrell B.G."/>
            <person name="Nurse P."/>
        </authorList>
    </citation>
    <scope>NUCLEOTIDE SEQUENCE [LARGE SCALE GENOMIC DNA]</scope>
    <source>
        <strain>972 / ATCC 24843</strain>
    </source>
</reference>
<reference key="3">
    <citation type="journal article" date="2000" name="Genes Cells">
        <title>Large-scale screening of intracellular protein localization in living fission yeast cells by the use of a GFP-fusion genomic DNA library.</title>
        <authorList>
            <person name="Ding D.-Q."/>
            <person name="Tomita Y."/>
            <person name="Yamamoto A."/>
            <person name="Chikashige Y."/>
            <person name="Haraguchi T."/>
            <person name="Hiraoka Y."/>
        </authorList>
    </citation>
    <scope>NUCLEOTIDE SEQUENCE [LARGE SCALE GENOMIC DNA] OF 538-722</scope>
    <scope>SUBCELLULAR LOCATION</scope>
    <source>
        <strain>ATCC 38364 / 968</strain>
    </source>
</reference>
<reference key="4">
    <citation type="journal article" date="1999" name="Nucleic Acids Res.">
        <title>Characterization of the rhp7(+) and rhp16(+) genes in Schizosaccharomyces pombe.</title>
        <authorList>
            <person name="Lombaerts M."/>
            <person name="Peltola P.H."/>
            <person name="Visse R."/>
            <person name="den Dulk H."/>
            <person name="Brandsma J.A."/>
            <person name="Brouwer J."/>
        </authorList>
    </citation>
    <scope>FUNCTION</scope>
</reference>
<reference key="5">
    <citation type="journal article" date="2006" name="Nat. Biotechnol.">
        <title>ORFeome cloning and global analysis of protein localization in the fission yeast Schizosaccharomyces pombe.</title>
        <authorList>
            <person name="Matsuyama A."/>
            <person name="Arai R."/>
            <person name="Yashiroda Y."/>
            <person name="Shirai A."/>
            <person name="Kamata A."/>
            <person name="Sekido S."/>
            <person name="Kobayashi Y."/>
            <person name="Hashimoto A."/>
            <person name="Hamamoto M."/>
            <person name="Hiraoka Y."/>
            <person name="Horinouchi S."/>
            <person name="Yoshida M."/>
        </authorList>
    </citation>
    <scope>SUBCELLULAR LOCATION [LARGE SCALE ANALYSIS]</scope>
</reference>
<proteinExistence type="inferred from homology"/>
<comment type="function">
    <text evidence="5">Involved in global genome repair (GGR) via nucleotide excision repair (NER), in conjunction with rhp7, after UV irradiation.</text>
</comment>
<comment type="subcellular location">
    <subcellularLocation>
        <location evidence="6 7">Nucleus</location>
    </subcellularLocation>
</comment>
<comment type="similarity">
    <text evidence="8">Belongs to the SNF2/RAD54 helicase family.</text>
</comment>
<comment type="sequence caution" evidence="8">
    <conflict type="erroneous initiation">
        <sequence resource="EMBL-CDS" id="CAA21065"/>
    </conflict>
</comment>
<dbReference type="EC" id="3.6.4.-"/>
<dbReference type="EMBL" id="S83324">
    <property type="protein sequence ID" value="AAB49515.1"/>
    <property type="molecule type" value="Genomic_DNA"/>
</dbReference>
<dbReference type="EMBL" id="CU329672">
    <property type="protein sequence ID" value="CAA21065.1"/>
    <property type="status" value="ALT_INIT"/>
    <property type="molecule type" value="Genomic_DNA"/>
</dbReference>
<dbReference type="EMBL" id="AB027876">
    <property type="protein sequence ID" value="BAA87180.1"/>
    <property type="molecule type" value="Genomic_DNA"/>
</dbReference>
<dbReference type="PIR" id="T41479">
    <property type="entry name" value="T41479"/>
</dbReference>
<dbReference type="PIR" id="T52472">
    <property type="entry name" value="T52472"/>
</dbReference>
<dbReference type="RefSeq" id="NP_587701.1">
    <property type="nucleotide sequence ID" value="NM_001022696.2"/>
</dbReference>
<dbReference type="SMR" id="P79051"/>
<dbReference type="FunCoup" id="P79051">
    <property type="interactions" value="322"/>
</dbReference>
<dbReference type="STRING" id="284812.P79051"/>
<dbReference type="iPTMnet" id="P79051"/>
<dbReference type="PaxDb" id="4896-SPCC330.01c.1"/>
<dbReference type="GeneID" id="2538860"/>
<dbReference type="KEGG" id="spo:2538860"/>
<dbReference type="PomBase" id="SPCC330.01c">
    <property type="gene designation" value="rhp16"/>
</dbReference>
<dbReference type="eggNOG" id="KOG1002">
    <property type="taxonomic scope" value="Eukaryota"/>
</dbReference>
<dbReference type="InParanoid" id="P79051"/>
<dbReference type="PhylomeDB" id="P79051"/>
<dbReference type="PRO" id="PR:P79051"/>
<dbReference type="Proteomes" id="UP000002485">
    <property type="component" value="Chromosome III"/>
</dbReference>
<dbReference type="GO" id="GO:0000109">
    <property type="term" value="C:nucleotide-excision repair complex"/>
    <property type="evidence" value="ECO:0000353"/>
    <property type="project" value="PomBase"/>
</dbReference>
<dbReference type="GO" id="GO:0005634">
    <property type="term" value="C:nucleus"/>
    <property type="evidence" value="ECO:0007005"/>
    <property type="project" value="PomBase"/>
</dbReference>
<dbReference type="GO" id="GO:0005524">
    <property type="term" value="F:ATP binding"/>
    <property type="evidence" value="ECO:0000255"/>
    <property type="project" value="PomBase"/>
</dbReference>
<dbReference type="GO" id="GO:0016887">
    <property type="term" value="F:ATP hydrolysis activity"/>
    <property type="evidence" value="ECO:0000305"/>
    <property type="project" value="PomBase"/>
</dbReference>
<dbReference type="GO" id="GO:0008094">
    <property type="term" value="F:ATP-dependent activity, acting on DNA"/>
    <property type="evidence" value="ECO:0000318"/>
    <property type="project" value="GO_Central"/>
</dbReference>
<dbReference type="GO" id="GO:0140658">
    <property type="term" value="F:ATP-dependent chromatin remodeler activity"/>
    <property type="evidence" value="ECO:0000303"/>
    <property type="project" value="PomBase"/>
</dbReference>
<dbReference type="GO" id="GO:0003677">
    <property type="term" value="F:DNA binding"/>
    <property type="evidence" value="ECO:0000305"/>
    <property type="project" value="PomBase"/>
</dbReference>
<dbReference type="GO" id="GO:0004386">
    <property type="term" value="F:helicase activity"/>
    <property type="evidence" value="ECO:0007669"/>
    <property type="project" value="UniProtKB-KW"/>
</dbReference>
<dbReference type="GO" id="GO:0061630">
    <property type="term" value="F:ubiquitin protein ligase activity"/>
    <property type="evidence" value="ECO:0000255"/>
    <property type="project" value="PomBase"/>
</dbReference>
<dbReference type="GO" id="GO:0008270">
    <property type="term" value="F:zinc ion binding"/>
    <property type="evidence" value="ECO:0000255"/>
    <property type="project" value="PomBase"/>
</dbReference>
<dbReference type="GO" id="GO:0006289">
    <property type="term" value="P:nucleotide-excision repair"/>
    <property type="evidence" value="ECO:0000316"/>
    <property type="project" value="PomBase"/>
</dbReference>
<dbReference type="GO" id="GO:0000720">
    <property type="term" value="P:pyrimidine dimer repair by nucleotide-excision repair"/>
    <property type="evidence" value="ECO:0000315"/>
    <property type="project" value="PomBase"/>
</dbReference>
<dbReference type="CDD" id="cd18008">
    <property type="entry name" value="DEXDc_SHPRH-like"/>
    <property type="match status" value="1"/>
</dbReference>
<dbReference type="CDD" id="cd16567">
    <property type="entry name" value="RING-HC_RAD16-like"/>
    <property type="match status" value="1"/>
</dbReference>
<dbReference type="CDD" id="cd18793">
    <property type="entry name" value="SF2_C_SNF"/>
    <property type="match status" value="1"/>
</dbReference>
<dbReference type="FunFam" id="3.30.40.10:FF:000753">
    <property type="entry name" value="DNA repair protein RAD16"/>
    <property type="match status" value="1"/>
</dbReference>
<dbReference type="FunFam" id="3.40.50.300:FF:001864">
    <property type="entry name" value="DNA repair protein RAD16"/>
    <property type="match status" value="1"/>
</dbReference>
<dbReference type="Gene3D" id="3.40.50.300">
    <property type="entry name" value="P-loop containing nucleotide triphosphate hydrolases"/>
    <property type="match status" value="1"/>
</dbReference>
<dbReference type="Gene3D" id="3.40.50.10810">
    <property type="entry name" value="Tandem AAA-ATPase domain"/>
    <property type="match status" value="1"/>
</dbReference>
<dbReference type="Gene3D" id="3.30.40.10">
    <property type="entry name" value="Zinc/RING finger domain, C3HC4 (zinc finger)"/>
    <property type="match status" value="1"/>
</dbReference>
<dbReference type="InterPro" id="IPR014001">
    <property type="entry name" value="Helicase_ATP-bd"/>
</dbReference>
<dbReference type="InterPro" id="IPR001650">
    <property type="entry name" value="Helicase_C-like"/>
</dbReference>
<dbReference type="InterPro" id="IPR027417">
    <property type="entry name" value="P-loop_NTPase"/>
</dbReference>
<dbReference type="InterPro" id="IPR038718">
    <property type="entry name" value="SNF2-like_sf"/>
</dbReference>
<dbReference type="InterPro" id="IPR049730">
    <property type="entry name" value="SNF2/RAD54-like_C"/>
</dbReference>
<dbReference type="InterPro" id="IPR000330">
    <property type="entry name" value="SNF2_N"/>
</dbReference>
<dbReference type="InterPro" id="IPR050628">
    <property type="entry name" value="SNF2_RAD54_helicase_TF"/>
</dbReference>
<dbReference type="InterPro" id="IPR018957">
    <property type="entry name" value="Znf_C3HC4_RING-type"/>
</dbReference>
<dbReference type="InterPro" id="IPR001841">
    <property type="entry name" value="Znf_RING"/>
</dbReference>
<dbReference type="InterPro" id="IPR013083">
    <property type="entry name" value="Znf_RING/FYVE/PHD"/>
</dbReference>
<dbReference type="InterPro" id="IPR017907">
    <property type="entry name" value="Znf_RING_CS"/>
</dbReference>
<dbReference type="PANTHER" id="PTHR45626:SF12">
    <property type="entry name" value="DNA REPAIR PROTEIN RAD16"/>
    <property type="match status" value="1"/>
</dbReference>
<dbReference type="PANTHER" id="PTHR45626">
    <property type="entry name" value="TRANSCRIPTION TERMINATION FACTOR 2-RELATED"/>
    <property type="match status" value="1"/>
</dbReference>
<dbReference type="Pfam" id="PF00271">
    <property type="entry name" value="Helicase_C"/>
    <property type="match status" value="1"/>
</dbReference>
<dbReference type="Pfam" id="PF00176">
    <property type="entry name" value="SNF2-rel_dom"/>
    <property type="match status" value="1"/>
</dbReference>
<dbReference type="Pfam" id="PF00097">
    <property type="entry name" value="zf-C3HC4"/>
    <property type="match status" value="1"/>
</dbReference>
<dbReference type="SMART" id="SM00487">
    <property type="entry name" value="DEXDc"/>
    <property type="match status" value="1"/>
</dbReference>
<dbReference type="SMART" id="SM00490">
    <property type="entry name" value="HELICc"/>
    <property type="match status" value="1"/>
</dbReference>
<dbReference type="SMART" id="SM00184">
    <property type="entry name" value="RING"/>
    <property type="match status" value="1"/>
</dbReference>
<dbReference type="SUPFAM" id="SSF52540">
    <property type="entry name" value="P-loop containing nucleoside triphosphate hydrolases"/>
    <property type="match status" value="2"/>
</dbReference>
<dbReference type="SUPFAM" id="SSF57850">
    <property type="entry name" value="RING/U-box"/>
    <property type="match status" value="1"/>
</dbReference>
<dbReference type="PROSITE" id="PS51192">
    <property type="entry name" value="HELICASE_ATP_BIND_1"/>
    <property type="match status" value="1"/>
</dbReference>
<dbReference type="PROSITE" id="PS51194">
    <property type="entry name" value="HELICASE_CTER"/>
    <property type="match status" value="1"/>
</dbReference>
<dbReference type="PROSITE" id="PS00518">
    <property type="entry name" value="ZF_RING_1"/>
    <property type="match status" value="1"/>
</dbReference>
<dbReference type="PROSITE" id="PS50089">
    <property type="entry name" value="ZF_RING_2"/>
    <property type="match status" value="1"/>
</dbReference>
<accession>P79051</accession>
<accession>O74911</accession>
<accession>Q9UU12</accession>
<accession>Q9UU98</accession>
<protein>
    <recommendedName>
        <fullName>ATP-dependent helicase rhp16</fullName>
        <ecNumber>3.6.4.-</ecNumber>
    </recommendedName>
    <alternativeName>
        <fullName>DNA repair protein rhp16</fullName>
    </alternativeName>
    <alternativeName>
        <fullName>RAD16 homolog</fullName>
    </alternativeName>
</protein>
<organism>
    <name type="scientific">Schizosaccharomyces pombe (strain 972 / ATCC 24843)</name>
    <name type="common">Fission yeast</name>
    <dbReference type="NCBI Taxonomy" id="284812"/>
    <lineage>
        <taxon>Eukaryota</taxon>
        <taxon>Fungi</taxon>
        <taxon>Dikarya</taxon>
        <taxon>Ascomycota</taxon>
        <taxon>Taphrinomycotina</taxon>
        <taxon>Schizosaccharomycetes</taxon>
        <taxon>Schizosaccharomycetales</taxon>
        <taxon>Schizosaccharomycetaceae</taxon>
        <taxon>Schizosaccharomyces</taxon>
    </lineage>
</organism>
<keyword id="KW-0067">ATP-binding</keyword>
<keyword id="KW-0227">DNA damage</keyword>
<keyword id="KW-0234">DNA repair</keyword>
<keyword id="KW-0238">DNA-binding</keyword>
<keyword id="KW-0347">Helicase</keyword>
<keyword id="KW-0378">Hydrolase</keyword>
<keyword id="KW-0479">Metal-binding</keyword>
<keyword id="KW-0547">Nucleotide-binding</keyword>
<keyword id="KW-0539">Nucleus</keyword>
<keyword id="KW-1185">Reference proteome</keyword>
<keyword id="KW-0862">Zinc</keyword>
<keyword id="KW-0863">Zinc-finger</keyword>
<gene>
    <name type="primary">rhp16</name>
    <name type="ORF">SPCC330.01c</name>
    <name type="ORF">SPCC613.13c</name>
</gene>
<evidence type="ECO:0000255" key="1">
    <source>
        <dbReference type="PROSITE-ProRule" id="PRU00175"/>
    </source>
</evidence>
<evidence type="ECO:0000255" key="2">
    <source>
        <dbReference type="PROSITE-ProRule" id="PRU00541"/>
    </source>
</evidence>
<evidence type="ECO:0000255" key="3">
    <source>
        <dbReference type="PROSITE-ProRule" id="PRU00542"/>
    </source>
</evidence>
<evidence type="ECO:0000256" key="4">
    <source>
        <dbReference type="SAM" id="MobiDB-lite"/>
    </source>
</evidence>
<evidence type="ECO:0000269" key="5">
    <source>
    </source>
</evidence>
<evidence type="ECO:0000269" key="6">
    <source>
    </source>
</evidence>
<evidence type="ECO:0000269" key="7">
    <source>
    </source>
</evidence>
<evidence type="ECO:0000305" key="8"/>
<feature type="chain" id="PRO_0000056131" description="ATP-dependent helicase rhp16">
    <location>
        <begin position="1"/>
        <end position="861"/>
    </location>
</feature>
<feature type="domain" description="Helicase ATP-binding" evidence="2">
    <location>
        <begin position="268"/>
        <end position="442"/>
    </location>
</feature>
<feature type="domain" description="Helicase C-terminal" evidence="3">
    <location>
        <begin position="695"/>
        <end position="848"/>
    </location>
</feature>
<feature type="zinc finger region" description="RING-type" evidence="1">
    <location>
        <begin position="609"/>
        <end position="652"/>
    </location>
</feature>
<feature type="region of interest" description="Disordered" evidence="4">
    <location>
        <begin position="1"/>
        <end position="217"/>
    </location>
</feature>
<feature type="short sequence motif" description="DEAH box">
    <location>
        <begin position="393"/>
        <end position="396"/>
    </location>
</feature>
<feature type="compositionally biased region" description="Polar residues" evidence="4">
    <location>
        <begin position="1"/>
        <end position="13"/>
    </location>
</feature>
<feature type="compositionally biased region" description="Basic and acidic residues" evidence="4">
    <location>
        <begin position="14"/>
        <end position="23"/>
    </location>
</feature>
<feature type="compositionally biased region" description="Basic and acidic residues" evidence="4">
    <location>
        <begin position="38"/>
        <end position="57"/>
    </location>
</feature>
<feature type="compositionally biased region" description="Polar residues" evidence="4">
    <location>
        <begin position="60"/>
        <end position="82"/>
    </location>
</feature>
<feature type="compositionally biased region" description="Low complexity" evidence="4">
    <location>
        <begin position="83"/>
        <end position="95"/>
    </location>
</feature>
<feature type="compositionally biased region" description="Polar residues" evidence="4">
    <location>
        <begin position="96"/>
        <end position="106"/>
    </location>
</feature>
<feature type="compositionally biased region" description="Basic residues" evidence="4">
    <location>
        <begin position="109"/>
        <end position="123"/>
    </location>
</feature>
<feature type="compositionally biased region" description="Acidic residues" evidence="4">
    <location>
        <begin position="131"/>
        <end position="145"/>
    </location>
</feature>
<feature type="compositionally biased region" description="Low complexity" evidence="4">
    <location>
        <begin position="193"/>
        <end position="204"/>
    </location>
</feature>
<feature type="binding site" evidence="2">
    <location>
        <begin position="281"/>
        <end position="288"/>
    </location>
    <ligand>
        <name>ATP</name>
        <dbReference type="ChEBI" id="CHEBI:30616"/>
    </ligand>
</feature>
<feature type="sequence conflict" description="In Ref. 1; AAB49515." evidence="8" ref="1">
    <original>ANPNTG</original>
    <variation>VKSQYR</variation>
    <location>
        <begin position="100"/>
        <end position="105"/>
    </location>
</feature>
<feature type="sequence conflict" description="In Ref. 1; AAB49515." evidence="8" ref="1">
    <original>KRSLRSSNLKKKF</original>
    <variation>NVIKVLEFEKV</variation>
    <location>
        <begin position="111"/>
        <end position="123"/>
    </location>
</feature>
<feature type="sequence conflict" description="In Ref. 1; AAB49515." evidence="8" ref="1">
    <original>LQ</original>
    <variation>FE</variation>
    <location>
        <begin position="425"/>
        <end position="426"/>
    </location>
</feature>
<feature type="sequence conflict" description="In Ref. 1; AAB49515." evidence="8" ref="1">
    <original>HSLLKHIML</original>
    <variation>DSLSMV</variation>
    <location>
        <begin position="506"/>
        <end position="514"/>
    </location>
</feature>
<feature type="sequence conflict" description="In Ref. 1; AAB49515." evidence="8" ref="1">
    <original>ADDLGL</original>
    <variation>RIPWI</variation>
    <location>
        <begin position="522"/>
        <end position="527"/>
    </location>
</feature>
<feature type="sequence conflict" description="In Ref. 1; AAB49515." evidence="8" ref="1">
    <original>KD</original>
    <variation>R</variation>
    <location>
        <begin position="536"/>
        <end position="537"/>
    </location>
</feature>
<feature type="sequence conflict" description="In Ref. 1; AAB49515." evidence="8" ref="1">
    <original>RP</original>
    <variation>GR</variation>
    <location>
        <begin position="808"/>
        <end position="809"/>
    </location>
</feature>